<reference key="1">
    <citation type="submission" date="2005-10" db="EMBL/GenBank/DDBJ databases">
        <title>Complete sequence of chromosome 1 of Burkholderia sp. 383.</title>
        <authorList>
            <consortium name="US DOE Joint Genome Institute"/>
            <person name="Copeland A."/>
            <person name="Lucas S."/>
            <person name="Lapidus A."/>
            <person name="Barry K."/>
            <person name="Detter J.C."/>
            <person name="Glavina T."/>
            <person name="Hammon N."/>
            <person name="Israni S."/>
            <person name="Pitluck S."/>
            <person name="Chain P."/>
            <person name="Malfatti S."/>
            <person name="Shin M."/>
            <person name="Vergez L."/>
            <person name="Schmutz J."/>
            <person name="Larimer F."/>
            <person name="Land M."/>
            <person name="Kyrpides N."/>
            <person name="Lykidis A."/>
            <person name="Richardson P."/>
        </authorList>
    </citation>
    <scope>NUCLEOTIDE SEQUENCE [LARGE SCALE GENOMIC DNA]</scope>
    <source>
        <strain>ATCC 17760 / DSM 23089 / LMG 22485 / NCIMB 9086 / R18194 / 383</strain>
    </source>
</reference>
<feature type="chain" id="PRO_0000374745" description="Ribosomal protein uS12 methylthiotransferase RimO">
    <location>
        <begin position="1"/>
        <end position="453"/>
    </location>
</feature>
<feature type="domain" description="MTTase N-terminal" evidence="1">
    <location>
        <begin position="5"/>
        <end position="120"/>
    </location>
</feature>
<feature type="domain" description="Radical SAM core" evidence="2">
    <location>
        <begin position="137"/>
        <end position="382"/>
    </location>
</feature>
<feature type="domain" description="TRAM" evidence="1">
    <location>
        <begin position="385"/>
        <end position="453"/>
    </location>
</feature>
<feature type="binding site" evidence="1">
    <location>
        <position position="14"/>
    </location>
    <ligand>
        <name>[4Fe-4S] cluster</name>
        <dbReference type="ChEBI" id="CHEBI:49883"/>
        <label>1</label>
    </ligand>
</feature>
<feature type="binding site" evidence="1">
    <location>
        <position position="50"/>
    </location>
    <ligand>
        <name>[4Fe-4S] cluster</name>
        <dbReference type="ChEBI" id="CHEBI:49883"/>
        <label>1</label>
    </ligand>
</feature>
<feature type="binding site" evidence="1">
    <location>
        <position position="79"/>
    </location>
    <ligand>
        <name>[4Fe-4S] cluster</name>
        <dbReference type="ChEBI" id="CHEBI:49883"/>
        <label>1</label>
    </ligand>
</feature>
<feature type="binding site" evidence="1">
    <location>
        <position position="151"/>
    </location>
    <ligand>
        <name>[4Fe-4S] cluster</name>
        <dbReference type="ChEBI" id="CHEBI:49883"/>
        <label>2</label>
        <note>4Fe-4S-S-AdoMet</note>
    </ligand>
</feature>
<feature type="binding site" evidence="1">
    <location>
        <position position="155"/>
    </location>
    <ligand>
        <name>[4Fe-4S] cluster</name>
        <dbReference type="ChEBI" id="CHEBI:49883"/>
        <label>2</label>
        <note>4Fe-4S-S-AdoMet</note>
    </ligand>
</feature>
<feature type="binding site" evidence="1">
    <location>
        <position position="158"/>
    </location>
    <ligand>
        <name>[4Fe-4S] cluster</name>
        <dbReference type="ChEBI" id="CHEBI:49883"/>
        <label>2</label>
        <note>4Fe-4S-S-AdoMet</note>
    </ligand>
</feature>
<comment type="function">
    <text evidence="1">Catalyzes the methylthiolation of an aspartic acid residue of ribosomal protein uS12.</text>
</comment>
<comment type="catalytic activity">
    <reaction evidence="1">
        <text>L-aspartate(89)-[ribosomal protein uS12]-hydrogen + (sulfur carrier)-SH + AH2 + 2 S-adenosyl-L-methionine = 3-methylsulfanyl-L-aspartate(89)-[ribosomal protein uS12]-hydrogen + (sulfur carrier)-H + 5'-deoxyadenosine + L-methionine + A + S-adenosyl-L-homocysteine + 2 H(+)</text>
        <dbReference type="Rhea" id="RHEA:37087"/>
        <dbReference type="Rhea" id="RHEA-COMP:10460"/>
        <dbReference type="Rhea" id="RHEA-COMP:10461"/>
        <dbReference type="Rhea" id="RHEA-COMP:14737"/>
        <dbReference type="Rhea" id="RHEA-COMP:14739"/>
        <dbReference type="ChEBI" id="CHEBI:13193"/>
        <dbReference type="ChEBI" id="CHEBI:15378"/>
        <dbReference type="ChEBI" id="CHEBI:17319"/>
        <dbReference type="ChEBI" id="CHEBI:17499"/>
        <dbReference type="ChEBI" id="CHEBI:29917"/>
        <dbReference type="ChEBI" id="CHEBI:29961"/>
        <dbReference type="ChEBI" id="CHEBI:57844"/>
        <dbReference type="ChEBI" id="CHEBI:57856"/>
        <dbReference type="ChEBI" id="CHEBI:59789"/>
        <dbReference type="ChEBI" id="CHEBI:64428"/>
        <dbReference type="ChEBI" id="CHEBI:73599"/>
        <dbReference type="EC" id="2.8.4.4"/>
    </reaction>
</comment>
<comment type="cofactor">
    <cofactor evidence="1">
        <name>[4Fe-4S] cluster</name>
        <dbReference type="ChEBI" id="CHEBI:49883"/>
    </cofactor>
    <text evidence="1">Binds 2 [4Fe-4S] clusters. One cluster is coordinated with 3 cysteines and an exchangeable S-adenosyl-L-methionine.</text>
</comment>
<comment type="subcellular location">
    <subcellularLocation>
        <location evidence="1">Cytoplasm</location>
    </subcellularLocation>
</comment>
<comment type="similarity">
    <text evidence="1">Belongs to the methylthiotransferase family. RimO subfamily.</text>
</comment>
<organism>
    <name type="scientific">Burkholderia lata (strain ATCC 17760 / DSM 23089 / LMG 22485 / NCIMB 9086 / R18194 / 383)</name>
    <dbReference type="NCBI Taxonomy" id="482957"/>
    <lineage>
        <taxon>Bacteria</taxon>
        <taxon>Pseudomonadati</taxon>
        <taxon>Pseudomonadota</taxon>
        <taxon>Betaproteobacteria</taxon>
        <taxon>Burkholderiales</taxon>
        <taxon>Burkholderiaceae</taxon>
        <taxon>Burkholderia</taxon>
        <taxon>Burkholderia cepacia complex</taxon>
    </lineage>
</organism>
<sequence>MSQSPKVGFVSLGCPKALVDSEQIITQLRAEGYEISGTYDGADLVVVNTCGFIDEAVQESLDAIGEALTENGKVIVTGCLGAKSSASGSNLIEEVHPKVLAVTGPHAVGEVMQAVHSHLPKPHDPFTDLVPAAGIKLTPRHYAYLKISEGCNHRCTFCIIPSMRGDLVSRPVAEVMLEAENLFKSGVKELLVISQDTSAYGVDVKYRTGFWNGKPIKTRMTDLVAALGELAAQYGAWVRLHYVYPYPSVDEVIPLMAEGPFKGHVLPYLDVPFQHAHPEVLKRMKRPANAEKVLERVQKWREICPDLTIRSTFIAGFPGETEEQFETLLDFIREAELDRVGCFAYSPVEGATANELDGALPDDVREERRARFMEVAEEVSANRIQRKVGKTLKVLIDEVSAEGGIGRTAADAPEIDGVVYVEPAAKASKRYKVGDFVSVKITGADGHDLWGEV</sequence>
<gene>
    <name evidence="1" type="primary">rimO</name>
    <name type="ordered locus">Bcep18194_A5082</name>
</gene>
<proteinExistence type="inferred from homology"/>
<accession>Q39FU0</accession>
<name>RIMO_BURL3</name>
<protein>
    <recommendedName>
        <fullName evidence="1">Ribosomal protein uS12 methylthiotransferase RimO</fullName>
        <shortName evidence="1">uS12 MTTase</shortName>
        <shortName evidence="1">uS12 methylthiotransferase</shortName>
        <ecNumber evidence="1">2.8.4.4</ecNumber>
    </recommendedName>
    <alternativeName>
        <fullName evidence="1">Ribosomal protein uS12 (aspartate-C(3))-methylthiotransferase</fullName>
    </alternativeName>
    <alternativeName>
        <fullName evidence="1">Ribosome maturation factor RimO</fullName>
    </alternativeName>
</protein>
<dbReference type="EC" id="2.8.4.4" evidence="1"/>
<dbReference type="EMBL" id="CP000151">
    <property type="protein sequence ID" value="ABB08676.1"/>
    <property type="molecule type" value="Genomic_DNA"/>
</dbReference>
<dbReference type="RefSeq" id="WP_011352232.1">
    <property type="nucleotide sequence ID" value="NZ_CADFCT010000004.1"/>
</dbReference>
<dbReference type="SMR" id="Q39FU0"/>
<dbReference type="GeneID" id="45094959"/>
<dbReference type="KEGG" id="bur:Bcep18194_A5082"/>
<dbReference type="PATRIC" id="fig|482957.22.peg.2018"/>
<dbReference type="HOGENOM" id="CLU_018697_0_0_4"/>
<dbReference type="Proteomes" id="UP000002705">
    <property type="component" value="Chromosome 1"/>
</dbReference>
<dbReference type="GO" id="GO:0005829">
    <property type="term" value="C:cytosol"/>
    <property type="evidence" value="ECO:0007669"/>
    <property type="project" value="TreeGrafter"/>
</dbReference>
<dbReference type="GO" id="GO:0051539">
    <property type="term" value="F:4 iron, 4 sulfur cluster binding"/>
    <property type="evidence" value="ECO:0007669"/>
    <property type="project" value="UniProtKB-UniRule"/>
</dbReference>
<dbReference type="GO" id="GO:0035599">
    <property type="term" value="F:aspartic acid methylthiotransferase activity"/>
    <property type="evidence" value="ECO:0007669"/>
    <property type="project" value="TreeGrafter"/>
</dbReference>
<dbReference type="GO" id="GO:0046872">
    <property type="term" value="F:metal ion binding"/>
    <property type="evidence" value="ECO:0007669"/>
    <property type="project" value="UniProtKB-KW"/>
</dbReference>
<dbReference type="GO" id="GO:0103039">
    <property type="term" value="F:protein methylthiotransferase activity"/>
    <property type="evidence" value="ECO:0007669"/>
    <property type="project" value="UniProtKB-EC"/>
</dbReference>
<dbReference type="GO" id="GO:0006400">
    <property type="term" value="P:tRNA modification"/>
    <property type="evidence" value="ECO:0007669"/>
    <property type="project" value="InterPro"/>
</dbReference>
<dbReference type="CDD" id="cd01335">
    <property type="entry name" value="Radical_SAM"/>
    <property type="match status" value="1"/>
</dbReference>
<dbReference type="FunFam" id="3.40.50.12160:FF:000002">
    <property type="entry name" value="Ribosomal protein S12 methylthiotransferase RimO"/>
    <property type="match status" value="1"/>
</dbReference>
<dbReference type="FunFam" id="3.80.30.20:FF:000001">
    <property type="entry name" value="tRNA-2-methylthio-N(6)-dimethylallyladenosine synthase 2"/>
    <property type="match status" value="1"/>
</dbReference>
<dbReference type="Gene3D" id="3.40.50.12160">
    <property type="entry name" value="Methylthiotransferase, N-terminal domain"/>
    <property type="match status" value="1"/>
</dbReference>
<dbReference type="Gene3D" id="2.40.50.140">
    <property type="entry name" value="Nucleic acid-binding proteins"/>
    <property type="match status" value="1"/>
</dbReference>
<dbReference type="Gene3D" id="3.80.30.20">
    <property type="entry name" value="tm_1862 like domain"/>
    <property type="match status" value="1"/>
</dbReference>
<dbReference type="HAMAP" id="MF_01865">
    <property type="entry name" value="MTTase_RimO"/>
    <property type="match status" value="1"/>
</dbReference>
<dbReference type="InterPro" id="IPR006638">
    <property type="entry name" value="Elp3/MiaA/NifB-like_rSAM"/>
</dbReference>
<dbReference type="InterPro" id="IPR005839">
    <property type="entry name" value="Methylthiotransferase"/>
</dbReference>
<dbReference type="InterPro" id="IPR020612">
    <property type="entry name" value="Methylthiotransferase_CS"/>
</dbReference>
<dbReference type="InterPro" id="IPR013848">
    <property type="entry name" value="Methylthiotransferase_N"/>
</dbReference>
<dbReference type="InterPro" id="IPR038135">
    <property type="entry name" value="Methylthiotransferase_N_sf"/>
</dbReference>
<dbReference type="InterPro" id="IPR012340">
    <property type="entry name" value="NA-bd_OB-fold"/>
</dbReference>
<dbReference type="InterPro" id="IPR005840">
    <property type="entry name" value="Ribosomal_uS12_MeSTrfase_RimO"/>
</dbReference>
<dbReference type="InterPro" id="IPR007197">
    <property type="entry name" value="rSAM"/>
</dbReference>
<dbReference type="InterPro" id="IPR023404">
    <property type="entry name" value="rSAM_horseshoe"/>
</dbReference>
<dbReference type="InterPro" id="IPR002792">
    <property type="entry name" value="TRAM_dom"/>
</dbReference>
<dbReference type="NCBIfam" id="TIGR01125">
    <property type="entry name" value="30S ribosomal protein S12 methylthiotransferase RimO"/>
    <property type="match status" value="1"/>
</dbReference>
<dbReference type="NCBIfam" id="TIGR00089">
    <property type="entry name" value="MiaB/RimO family radical SAM methylthiotransferase"/>
    <property type="match status" value="1"/>
</dbReference>
<dbReference type="PANTHER" id="PTHR43837">
    <property type="entry name" value="RIBOSOMAL PROTEIN S12 METHYLTHIOTRANSFERASE RIMO"/>
    <property type="match status" value="1"/>
</dbReference>
<dbReference type="PANTHER" id="PTHR43837:SF1">
    <property type="entry name" value="RIBOSOMAL PROTEIN US12 METHYLTHIOTRANSFERASE RIMO"/>
    <property type="match status" value="1"/>
</dbReference>
<dbReference type="Pfam" id="PF04055">
    <property type="entry name" value="Radical_SAM"/>
    <property type="match status" value="1"/>
</dbReference>
<dbReference type="Pfam" id="PF18693">
    <property type="entry name" value="TRAM_2"/>
    <property type="match status" value="1"/>
</dbReference>
<dbReference type="Pfam" id="PF00919">
    <property type="entry name" value="UPF0004"/>
    <property type="match status" value="1"/>
</dbReference>
<dbReference type="SFLD" id="SFLDG01082">
    <property type="entry name" value="B12-binding_domain_containing"/>
    <property type="match status" value="1"/>
</dbReference>
<dbReference type="SFLD" id="SFLDS00029">
    <property type="entry name" value="Radical_SAM"/>
    <property type="match status" value="1"/>
</dbReference>
<dbReference type="SFLD" id="SFLDF00274">
    <property type="entry name" value="ribosomal_protein_S12_methylth"/>
    <property type="match status" value="1"/>
</dbReference>
<dbReference type="SMART" id="SM00729">
    <property type="entry name" value="Elp3"/>
    <property type="match status" value="1"/>
</dbReference>
<dbReference type="SUPFAM" id="SSF102114">
    <property type="entry name" value="Radical SAM enzymes"/>
    <property type="match status" value="1"/>
</dbReference>
<dbReference type="PROSITE" id="PS51449">
    <property type="entry name" value="MTTASE_N"/>
    <property type="match status" value="1"/>
</dbReference>
<dbReference type="PROSITE" id="PS01278">
    <property type="entry name" value="MTTASE_RADICAL"/>
    <property type="match status" value="1"/>
</dbReference>
<dbReference type="PROSITE" id="PS51918">
    <property type="entry name" value="RADICAL_SAM"/>
    <property type="match status" value="1"/>
</dbReference>
<dbReference type="PROSITE" id="PS50926">
    <property type="entry name" value="TRAM"/>
    <property type="match status" value="1"/>
</dbReference>
<evidence type="ECO:0000255" key="1">
    <source>
        <dbReference type="HAMAP-Rule" id="MF_01865"/>
    </source>
</evidence>
<evidence type="ECO:0000255" key="2">
    <source>
        <dbReference type="PROSITE-ProRule" id="PRU01266"/>
    </source>
</evidence>
<keyword id="KW-0004">4Fe-4S</keyword>
<keyword id="KW-0963">Cytoplasm</keyword>
<keyword id="KW-0408">Iron</keyword>
<keyword id="KW-0411">Iron-sulfur</keyword>
<keyword id="KW-0479">Metal-binding</keyword>
<keyword id="KW-0949">S-adenosyl-L-methionine</keyword>
<keyword id="KW-0808">Transferase</keyword>